<dbReference type="EC" id="1.14.-.-"/>
<dbReference type="EMBL" id="AE014134">
    <property type="protein sequence ID" value="AAF52234.2"/>
    <property type="molecule type" value="Genomic_DNA"/>
</dbReference>
<dbReference type="EMBL" id="AY061002">
    <property type="protein sequence ID" value="AAL28550.1"/>
    <property type="molecule type" value="mRNA"/>
</dbReference>
<dbReference type="RefSeq" id="NP_608918.1">
    <property type="nucleotide sequence ID" value="NM_135074.3"/>
</dbReference>
<dbReference type="SMR" id="Q9VMS7"/>
<dbReference type="FunCoup" id="Q9VMS7">
    <property type="interactions" value="6"/>
</dbReference>
<dbReference type="IntAct" id="Q9VMS7">
    <property type="interactions" value="2"/>
</dbReference>
<dbReference type="STRING" id="7227.FBpp0078703"/>
<dbReference type="PaxDb" id="7227-FBpp0078703"/>
<dbReference type="DNASU" id="33756"/>
<dbReference type="EnsemblMetazoa" id="FBtr0079068">
    <property type="protein sequence ID" value="FBpp0078703"/>
    <property type="gene ID" value="FBgn0031695"/>
</dbReference>
<dbReference type="GeneID" id="33756"/>
<dbReference type="KEGG" id="dme:Dmel_CG14031"/>
<dbReference type="UCSC" id="CG14031-RA">
    <property type="organism name" value="d. melanogaster"/>
</dbReference>
<dbReference type="AGR" id="FB:FBgn0031695"/>
<dbReference type="CTD" id="33756"/>
<dbReference type="FlyBase" id="FBgn0031695">
    <property type="gene designation" value="Cyp4ac3"/>
</dbReference>
<dbReference type="VEuPathDB" id="VectorBase:FBgn0031695"/>
<dbReference type="eggNOG" id="KOG0157">
    <property type="taxonomic scope" value="Eukaryota"/>
</dbReference>
<dbReference type="GeneTree" id="ENSGT00940000167779"/>
<dbReference type="HOGENOM" id="CLU_001570_5_1_1"/>
<dbReference type="InParanoid" id="Q9VMS7"/>
<dbReference type="OMA" id="MFQFNEL"/>
<dbReference type="OrthoDB" id="1470350at2759"/>
<dbReference type="PhylomeDB" id="Q9VMS7"/>
<dbReference type="Reactome" id="R-DME-193144">
    <property type="pathway name" value="Estrogen biosynthesis"/>
</dbReference>
<dbReference type="Reactome" id="R-DME-211976">
    <property type="pathway name" value="Endogenous sterols"/>
</dbReference>
<dbReference type="BioGRID-ORCS" id="33756">
    <property type="hits" value="0 hits in 3 CRISPR screens"/>
</dbReference>
<dbReference type="GenomeRNAi" id="33756"/>
<dbReference type="PRO" id="PR:Q9VMS7"/>
<dbReference type="Proteomes" id="UP000000803">
    <property type="component" value="Chromosome 2L"/>
</dbReference>
<dbReference type="Bgee" id="FBgn0031695">
    <property type="expression patterns" value="Expressed in visceral muscle cell in digestive tract and 71 other cell types or tissues"/>
</dbReference>
<dbReference type="GO" id="GO:0005789">
    <property type="term" value="C:endoplasmic reticulum membrane"/>
    <property type="evidence" value="ECO:0007669"/>
    <property type="project" value="UniProtKB-SubCell"/>
</dbReference>
<dbReference type="GO" id="GO:0020037">
    <property type="term" value="F:heme binding"/>
    <property type="evidence" value="ECO:0007669"/>
    <property type="project" value="InterPro"/>
</dbReference>
<dbReference type="GO" id="GO:0005506">
    <property type="term" value="F:iron ion binding"/>
    <property type="evidence" value="ECO:0007669"/>
    <property type="project" value="InterPro"/>
</dbReference>
<dbReference type="GO" id="GO:0004497">
    <property type="term" value="F:monooxygenase activity"/>
    <property type="evidence" value="ECO:0007669"/>
    <property type="project" value="UniProtKB-KW"/>
</dbReference>
<dbReference type="GO" id="GO:0016705">
    <property type="term" value="F:oxidoreductase activity, acting on paired donors, with incorporation or reduction of molecular oxygen"/>
    <property type="evidence" value="ECO:0007669"/>
    <property type="project" value="InterPro"/>
</dbReference>
<dbReference type="CDD" id="cd20628">
    <property type="entry name" value="CYP4"/>
    <property type="match status" value="1"/>
</dbReference>
<dbReference type="Gene3D" id="1.10.630.10">
    <property type="entry name" value="Cytochrome P450"/>
    <property type="match status" value="1"/>
</dbReference>
<dbReference type="InterPro" id="IPR001128">
    <property type="entry name" value="Cyt_P450"/>
</dbReference>
<dbReference type="InterPro" id="IPR017972">
    <property type="entry name" value="Cyt_P450_CS"/>
</dbReference>
<dbReference type="InterPro" id="IPR002401">
    <property type="entry name" value="Cyt_P450_E_grp-I"/>
</dbReference>
<dbReference type="InterPro" id="IPR036396">
    <property type="entry name" value="Cyt_P450_sf"/>
</dbReference>
<dbReference type="InterPro" id="IPR050196">
    <property type="entry name" value="Cytochrome_P450_Monoox"/>
</dbReference>
<dbReference type="PANTHER" id="PTHR24291:SF105">
    <property type="entry name" value="CYTOCHROME P450 4P1-RELATED"/>
    <property type="match status" value="1"/>
</dbReference>
<dbReference type="PANTHER" id="PTHR24291">
    <property type="entry name" value="CYTOCHROME P450 FAMILY 4"/>
    <property type="match status" value="1"/>
</dbReference>
<dbReference type="Pfam" id="PF00067">
    <property type="entry name" value="p450"/>
    <property type="match status" value="1"/>
</dbReference>
<dbReference type="PRINTS" id="PR00463">
    <property type="entry name" value="EP450I"/>
</dbReference>
<dbReference type="PRINTS" id="PR00385">
    <property type="entry name" value="P450"/>
</dbReference>
<dbReference type="SUPFAM" id="SSF48264">
    <property type="entry name" value="Cytochrome P450"/>
    <property type="match status" value="1"/>
</dbReference>
<dbReference type="PROSITE" id="PS00086">
    <property type="entry name" value="CYTOCHROME_P450"/>
    <property type="match status" value="1"/>
</dbReference>
<evidence type="ECO:0000250" key="1"/>
<evidence type="ECO:0000305" key="2"/>
<proteinExistence type="evidence at transcript level"/>
<feature type="chain" id="PRO_0000051828" description="Probable cytochrome P450 4ac3">
    <location>
        <begin position="1"/>
        <end position="509"/>
    </location>
</feature>
<feature type="binding site" description="axial binding residue" evidence="1">
    <location>
        <position position="454"/>
    </location>
    <ligand>
        <name>heme</name>
        <dbReference type="ChEBI" id="CHEBI:30413"/>
    </ligand>
    <ligandPart>
        <name>Fe</name>
        <dbReference type="ChEBI" id="CHEBI:18248"/>
    </ligandPart>
</feature>
<comment type="function">
    <text evidence="1">May be involved in the metabolism of insect hormones and in the breakdown of synthetic insecticides.</text>
</comment>
<comment type="cofactor">
    <cofactor evidence="1">
        <name>heme</name>
        <dbReference type="ChEBI" id="CHEBI:30413"/>
    </cofactor>
</comment>
<comment type="subcellular location">
    <subcellularLocation>
        <location evidence="2">Endoplasmic reticulum membrane</location>
        <topology evidence="2">Peripheral membrane protein</topology>
    </subcellularLocation>
    <subcellularLocation>
        <location evidence="2">Microsome membrane</location>
        <topology evidence="2">Peripheral membrane protein</topology>
    </subcellularLocation>
</comment>
<comment type="similarity">
    <text evidence="2">Belongs to the cytochrome P450 family.</text>
</comment>
<reference key="1">
    <citation type="journal article" date="2000" name="Science">
        <title>The genome sequence of Drosophila melanogaster.</title>
        <authorList>
            <person name="Adams M.D."/>
            <person name="Celniker S.E."/>
            <person name="Holt R.A."/>
            <person name="Evans C.A."/>
            <person name="Gocayne J.D."/>
            <person name="Amanatides P.G."/>
            <person name="Scherer S.E."/>
            <person name="Li P.W."/>
            <person name="Hoskins R.A."/>
            <person name="Galle R.F."/>
            <person name="George R.A."/>
            <person name="Lewis S.E."/>
            <person name="Richards S."/>
            <person name="Ashburner M."/>
            <person name="Henderson S.N."/>
            <person name="Sutton G.G."/>
            <person name="Wortman J.R."/>
            <person name="Yandell M.D."/>
            <person name="Zhang Q."/>
            <person name="Chen L.X."/>
            <person name="Brandon R.C."/>
            <person name="Rogers Y.-H.C."/>
            <person name="Blazej R.G."/>
            <person name="Champe M."/>
            <person name="Pfeiffer B.D."/>
            <person name="Wan K.H."/>
            <person name="Doyle C."/>
            <person name="Baxter E.G."/>
            <person name="Helt G."/>
            <person name="Nelson C.R."/>
            <person name="Miklos G.L.G."/>
            <person name="Abril J.F."/>
            <person name="Agbayani A."/>
            <person name="An H.-J."/>
            <person name="Andrews-Pfannkoch C."/>
            <person name="Baldwin D."/>
            <person name="Ballew R.M."/>
            <person name="Basu A."/>
            <person name="Baxendale J."/>
            <person name="Bayraktaroglu L."/>
            <person name="Beasley E.M."/>
            <person name="Beeson K.Y."/>
            <person name="Benos P.V."/>
            <person name="Berman B.P."/>
            <person name="Bhandari D."/>
            <person name="Bolshakov S."/>
            <person name="Borkova D."/>
            <person name="Botchan M.R."/>
            <person name="Bouck J."/>
            <person name="Brokstein P."/>
            <person name="Brottier P."/>
            <person name="Burtis K.C."/>
            <person name="Busam D.A."/>
            <person name="Butler H."/>
            <person name="Cadieu E."/>
            <person name="Center A."/>
            <person name="Chandra I."/>
            <person name="Cherry J.M."/>
            <person name="Cawley S."/>
            <person name="Dahlke C."/>
            <person name="Davenport L.B."/>
            <person name="Davies P."/>
            <person name="de Pablos B."/>
            <person name="Delcher A."/>
            <person name="Deng Z."/>
            <person name="Mays A.D."/>
            <person name="Dew I."/>
            <person name="Dietz S.M."/>
            <person name="Dodson K."/>
            <person name="Doup L.E."/>
            <person name="Downes M."/>
            <person name="Dugan-Rocha S."/>
            <person name="Dunkov B.C."/>
            <person name="Dunn P."/>
            <person name="Durbin K.J."/>
            <person name="Evangelista C.C."/>
            <person name="Ferraz C."/>
            <person name="Ferriera S."/>
            <person name="Fleischmann W."/>
            <person name="Fosler C."/>
            <person name="Gabrielian A.E."/>
            <person name="Garg N.S."/>
            <person name="Gelbart W.M."/>
            <person name="Glasser K."/>
            <person name="Glodek A."/>
            <person name="Gong F."/>
            <person name="Gorrell J.H."/>
            <person name="Gu Z."/>
            <person name="Guan P."/>
            <person name="Harris M."/>
            <person name="Harris N.L."/>
            <person name="Harvey D.A."/>
            <person name="Heiman T.J."/>
            <person name="Hernandez J.R."/>
            <person name="Houck J."/>
            <person name="Hostin D."/>
            <person name="Houston K.A."/>
            <person name="Howland T.J."/>
            <person name="Wei M.-H."/>
            <person name="Ibegwam C."/>
            <person name="Jalali M."/>
            <person name="Kalush F."/>
            <person name="Karpen G.H."/>
            <person name="Ke Z."/>
            <person name="Kennison J.A."/>
            <person name="Ketchum K.A."/>
            <person name="Kimmel B.E."/>
            <person name="Kodira C.D."/>
            <person name="Kraft C.L."/>
            <person name="Kravitz S."/>
            <person name="Kulp D."/>
            <person name="Lai Z."/>
            <person name="Lasko P."/>
            <person name="Lei Y."/>
            <person name="Levitsky A.A."/>
            <person name="Li J.H."/>
            <person name="Li Z."/>
            <person name="Liang Y."/>
            <person name="Lin X."/>
            <person name="Liu X."/>
            <person name="Mattei B."/>
            <person name="McIntosh T.C."/>
            <person name="McLeod M.P."/>
            <person name="McPherson D."/>
            <person name="Merkulov G."/>
            <person name="Milshina N.V."/>
            <person name="Mobarry C."/>
            <person name="Morris J."/>
            <person name="Moshrefi A."/>
            <person name="Mount S.M."/>
            <person name="Moy M."/>
            <person name="Murphy B."/>
            <person name="Murphy L."/>
            <person name="Muzny D.M."/>
            <person name="Nelson D.L."/>
            <person name="Nelson D.R."/>
            <person name="Nelson K.A."/>
            <person name="Nixon K."/>
            <person name="Nusskern D.R."/>
            <person name="Pacleb J.M."/>
            <person name="Palazzolo M."/>
            <person name="Pittman G.S."/>
            <person name="Pan S."/>
            <person name="Pollard J."/>
            <person name="Puri V."/>
            <person name="Reese M.G."/>
            <person name="Reinert K."/>
            <person name="Remington K."/>
            <person name="Saunders R.D.C."/>
            <person name="Scheeler F."/>
            <person name="Shen H."/>
            <person name="Shue B.C."/>
            <person name="Siden-Kiamos I."/>
            <person name="Simpson M."/>
            <person name="Skupski M.P."/>
            <person name="Smith T.J."/>
            <person name="Spier E."/>
            <person name="Spradling A.C."/>
            <person name="Stapleton M."/>
            <person name="Strong R."/>
            <person name="Sun E."/>
            <person name="Svirskas R."/>
            <person name="Tector C."/>
            <person name="Turner R."/>
            <person name="Venter E."/>
            <person name="Wang A.H."/>
            <person name="Wang X."/>
            <person name="Wang Z.-Y."/>
            <person name="Wassarman D.A."/>
            <person name="Weinstock G.M."/>
            <person name="Weissenbach J."/>
            <person name="Williams S.M."/>
            <person name="Woodage T."/>
            <person name="Worley K.C."/>
            <person name="Wu D."/>
            <person name="Yang S."/>
            <person name="Yao Q.A."/>
            <person name="Ye J."/>
            <person name="Yeh R.-F."/>
            <person name="Zaveri J.S."/>
            <person name="Zhan M."/>
            <person name="Zhang G."/>
            <person name="Zhao Q."/>
            <person name="Zheng L."/>
            <person name="Zheng X.H."/>
            <person name="Zhong F.N."/>
            <person name="Zhong W."/>
            <person name="Zhou X."/>
            <person name="Zhu S.C."/>
            <person name="Zhu X."/>
            <person name="Smith H.O."/>
            <person name="Gibbs R.A."/>
            <person name="Myers E.W."/>
            <person name="Rubin G.M."/>
            <person name="Venter J.C."/>
        </authorList>
    </citation>
    <scope>NUCLEOTIDE SEQUENCE [LARGE SCALE GENOMIC DNA]</scope>
    <source>
        <strain>Berkeley</strain>
    </source>
</reference>
<reference key="2">
    <citation type="journal article" date="2002" name="Genome Biol.">
        <title>Annotation of the Drosophila melanogaster euchromatic genome: a systematic review.</title>
        <authorList>
            <person name="Misra S."/>
            <person name="Crosby M.A."/>
            <person name="Mungall C.J."/>
            <person name="Matthews B.B."/>
            <person name="Campbell K.S."/>
            <person name="Hradecky P."/>
            <person name="Huang Y."/>
            <person name="Kaminker J.S."/>
            <person name="Millburn G.H."/>
            <person name="Prochnik S.E."/>
            <person name="Smith C.D."/>
            <person name="Tupy J.L."/>
            <person name="Whitfield E.J."/>
            <person name="Bayraktaroglu L."/>
            <person name="Berman B.P."/>
            <person name="Bettencourt B.R."/>
            <person name="Celniker S.E."/>
            <person name="de Grey A.D.N.J."/>
            <person name="Drysdale R.A."/>
            <person name="Harris N.L."/>
            <person name="Richter J."/>
            <person name="Russo S."/>
            <person name="Schroeder A.J."/>
            <person name="Shu S.Q."/>
            <person name="Stapleton M."/>
            <person name="Yamada C."/>
            <person name="Ashburner M."/>
            <person name="Gelbart W.M."/>
            <person name="Rubin G.M."/>
            <person name="Lewis S.E."/>
        </authorList>
    </citation>
    <scope>GENOME REANNOTATION</scope>
    <source>
        <strain>Berkeley</strain>
    </source>
</reference>
<reference key="3">
    <citation type="journal article" date="2002" name="Genome Biol.">
        <title>A Drosophila full-length cDNA resource.</title>
        <authorList>
            <person name="Stapleton M."/>
            <person name="Carlson J.W."/>
            <person name="Brokstein P."/>
            <person name="Yu C."/>
            <person name="Champe M."/>
            <person name="George R.A."/>
            <person name="Guarin H."/>
            <person name="Kronmiller B."/>
            <person name="Pacleb J.M."/>
            <person name="Park S."/>
            <person name="Wan K.H."/>
            <person name="Rubin G.M."/>
            <person name="Celniker S.E."/>
        </authorList>
    </citation>
    <scope>NUCLEOTIDE SEQUENCE [LARGE SCALE MRNA]</scope>
    <source>
        <strain>Berkeley</strain>
        <tissue>Head</tissue>
    </source>
</reference>
<sequence>MWIALLGSSLLIGALWLLLRQLNKTYFILSLCKRVRTADGSPLESKVFVVPGKTRFGNNLDLLNLTPANIFSYIRESTAKANGQNYIWNFLFAPEYNIVRAEDAEEIFQSTKITTKNMSYELIRPFLGDGLLISIDQKWHTRRKTLTPAFHFNILQSFLSIFKEESKKFIKILDKNVGFELELNQIIPQFTLNNICETALGVKLDDMSEGNEYRKAIHDFEIVFNQRMCNPLMFFNWYFFLFGDYKKYSRILRTIHGFSSGIIQRKRQQFKQKQLGQVDEFGKKQRYAMLDTLLAAEAEGKIDHQGICDEVNTFMFGGYDTTSTSLIFTLLLLALHADVQERCYEELQDLPEDIDEVSMFQFNELIHLECVIKESLRLFPSAPIIGRTCIEESVMNGLVLPKNAQISIHIYDIMRDARHFPKPNQFLPERFLPENSVNRHPFAFVPFSAGPRNCIGQKFGVLEIKVLLAAVIRNFKLLPATQLEDLTFENGIVLRTQQNIKVKFEARVK</sequence>
<accession>Q9VMS7</accession>
<keyword id="KW-0256">Endoplasmic reticulum</keyword>
<keyword id="KW-0349">Heme</keyword>
<keyword id="KW-0408">Iron</keyword>
<keyword id="KW-0472">Membrane</keyword>
<keyword id="KW-0479">Metal-binding</keyword>
<keyword id="KW-0492">Microsome</keyword>
<keyword id="KW-0503">Monooxygenase</keyword>
<keyword id="KW-0560">Oxidoreductase</keyword>
<keyword id="KW-1185">Reference proteome</keyword>
<organism>
    <name type="scientific">Drosophila melanogaster</name>
    <name type="common">Fruit fly</name>
    <dbReference type="NCBI Taxonomy" id="7227"/>
    <lineage>
        <taxon>Eukaryota</taxon>
        <taxon>Metazoa</taxon>
        <taxon>Ecdysozoa</taxon>
        <taxon>Arthropoda</taxon>
        <taxon>Hexapoda</taxon>
        <taxon>Insecta</taxon>
        <taxon>Pterygota</taxon>
        <taxon>Neoptera</taxon>
        <taxon>Endopterygota</taxon>
        <taxon>Diptera</taxon>
        <taxon>Brachycera</taxon>
        <taxon>Muscomorpha</taxon>
        <taxon>Ephydroidea</taxon>
        <taxon>Drosophilidae</taxon>
        <taxon>Drosophila</taxon>
        <taxon>Sophophora</taxon>
    </lineage>
</organism>
<name>C4AC3_DROME</name>
<protein>
    <recommendedName>
        <fullName>Probable cytochrome P450 4ac3</fullName>
        <ecNumber>1.14.-.-</ecNumber>
    </recommendedName>
    <alternativeName>
        <fullName>CYPIVAC3</fullName>
    </alternativeName>
</protein>
<gene>
    <name type="primary">Cyp4ac3</name>
    <name type="ORF">CG14031</name>
</gene>